<keyword id="KW-0002">3D-structure</keyword>
<keyword id="KW-0472">Membrane</keyword>
<keyword id="KW-0509">mRNA transport</keyword>
<keyword id="KW-0906">Nuclear pore complex</keyword>
<keyword id="KW-0539">Nucleus</keyword>
<keyword id="KW-0653">Protein transport</keyword>
<keyword id="KW-1185">Reference proteome</keyword>
<keyword id="KW-0811">Translocation</keyword>
<keyword id="KW-0812">Transmembrane</keyword>
<keyword id="KW-1133">Transmembrane helix</keyword>
<keyword id="KW-0813">Transport</keyword>
<dbReference type="EMBL" id="DQ191159">
    <property type="protein sequence ID" value="ABA39292.1"/>
    <property type="molecule type" value="mRNA"/>
</dbReference>
<dbReference type="EMBL" id="BC079784">
    <property type="protein sequence ID" value="AAH79784.1"/>
    <property type="molecule type" value="mRNA"/>
</dbReference>
<dbReference type="RefSeq" id="NP_001087436.1">
    <property type="nucleotide sequence ID" value="NM_001093967.2"/>
</dbReference>
<dbReference type="PDB" id="7WKK">
    <property type="method" value="EM"/>
    <property type="resolution" value="4.20 A"/>
    <property type="chains" value="N/n=1-660"/>
</dbReference>
<dbReference type="PDBsum" id="7WKK"/>
<dbReference type="EMDB" id="EMD-32566"/>
<dbReference type="SMR" id="Q6AX31"/>
<dbReference type="DNASU" id="447260"/>
<dbReference type="GeneID" id="447260"/>
<dbReference type="KEGG" id="xla:447260"/>
<dbReference type="AGR" id="Xenbase:XB-GENE-5736383"/>
<dbReference type="CTD" id="447260"/>
<dbReference type="Xenbase" id="XB-GENE-5736383">
    <property type="gene designation" value="ndc1.S"/>
</dbReference>
<dbReference type="OMA" id="XQYKFLR"/>
<dbReference type="OrthoDB" id="67850at2759"/>
<dbReference type="Proteomes" id="UP000186698">
    <property type="component" value="Chromosome 4S"/>
</dbReference>
<dbReference type="Bgee" id="447260">
    <property type="expression patterns" value="Expressed in egg cell and 19 other cell types or tissues"/>
</dbReference>
<dbReference type="GO" id="GO:0031965">
    <property type="term" value="C:nuclear membrane"/>
    <property type="evidence" value="ECO:0007669"/>
    <property type="project" value="UniProtKB-SubCell"/>
</dbReference>
<dbReference type="GO" id="GO:0070762">
    <property type="term" value="C:nuclear pore transmembrane ring"/>
    <property type="evidence" value="ECO:0000318"/>
    <property type="project" value="GO_Central"/>
</dbReference>
<dbReference type="GO" id="GO:0030674">
    <property type="term" value="F:protein-macromolecule adaptor activity"/>
    <property type="evidence" value="ECO:0000318"/>
    <property type="project" value="GO_Central"/>
</dbReference>
<dbReference type="GO" id="GO:0051028">
    <property type="term" value="P:mRNA transport"/>
    <property type="evidence" value="ECO:0007669"/>
    <property type="project" value="UniProtKB-KW"/>
</dbReference>
<dbReference type="GO" id="GO:0006999">
    <property type="term" value="P:nuclear pore organization"/>
    <property type="evidence" value="ECO:0000318"/>
    <property type="project" value="GO_Central"/>
</dbReference>
<dbReference type="GO" id="GO:0015031">
    <property type="term" value="P:protein transport"/>
    <property type="evidence" value="ECO:0007669"/>
    <property type="project" value="UniProtKB-KW"/>
</dbReference>
<dbReference type="InterPro" id="IPR019049">
    <property type="entry name" value="Nucleoporin_prot_Ndc1/Nup"/>
</dbReference>
<dbReference type="PANTHER" id="PTHR13269">
    <property type="entry name" value="NUCLEOPORIN NDC1"/>
    <property type="match status" value="1"/>
</dbReference>
<dbReference type="PANTHER" id="PTHR13269:SF6">
    <property type="entry name" value="NUCLEOPORIN NDC1"/>
    <property type="match status" value="1"/>
</dbReference>
<dbReference type="Pfam" id="PF09531">
    <property type="entry name" value="Ndc1_Nup"/>
    <property type="match status" value="1"/>
</dbReference>
<gene>
    <name type="primary">ndc1</name>
    <name type="synonym">tmem48</name>
</gene>
<sequence length="660" mass="74338">MTMLGERLVLRWRVAASFAWSVILMPVCCALFIVLSRIQILHPIQWLTDSISDLTSSYTIFCLLLICAILGLQCTFLMEYYTVVPSIPCSRLALIGNLLLPHRILHSLAHVAMGVLASWCYAVLSKGKYQLLVVSCTLQSEDEADKPSHCLNESHLFQLLCGAFFGYSYSLQYFVHNMNYLSFPSIQQYKYLQFRRFLPLIIKQSVFQSLYFIRSYAILYFCLGNIPRTWIQTALNLHMDRQQPSLDTLRGFLNLSLFYQIWLSGTFLLATWYMVWILFRIYTTEARIFPVQTSFAEEAEKCLPFILNSNTLPLVKYLAMQDLVLLSQYSPSRRQEVFSLSQPGGHPHNWTSISKECLNLMSSLTSRLIAHQEAAANNGRMRVPSSPKQIRKSSSSSGTSLIEDSAEQTQNLSTIPRIGIPSLLKTASLKSSLDIGSPFATPGVKQMSESLDPNTPCHGSVQSPQVTRRGAKLWTSDSDVQKNGSEVSPVMHRPVCNGAKQGILHTWFQHKLVQIKNVLSKRGLIMYLFSKHPEASSQDVFADAQIHIWALEALSHLVAASFSEDRMGVVQTSLSSVLAILLTLQEAVEKHFKLPHASSKPARNPGSLLDSSCKTLRFSLRAALKTAIYRITTTFGEHLHAVPVSSEHKKKLQQFLDFKE</sequence>
<proteinExistence type="evidence at protein level"/>
<feature type="chain" id="PRO_0000235245" description="Nucleoporin NDC1">
    <location>
        <begin position="1"/>
        <end position="660"/>
    </location>
</feature>
<feature type="topological domain" description="Cytoplasmic" evidence="1">
    <location>
        <begin position="1"/>
        <end position="13"/>
    </location>
</feature>
<feature type="transmembrane region" description="Helical; Name=1" evidence="1">
    <location>
        <begin position="14"/>
        <end position="34"/>
    </location>
</feature>
<feature type="topological domain" description="Perinuclear space" evidence="1">
    <location>
        <begin position="35"/>
        <end position="57"/>
    </location>
</feature>
<feature type="transmembrane region" description="Helical; Name=2" evidence="1">
    <location>
        <begin position="58"/>
        <end position="78"/>
    </location>
</feature>
<feature type="topological domain" description="Cytoplasmic" evidence="1">
    <location>
        <begin position="79"/>
        <end position="103"/>
    </location>
</feature>
<feature type="transmembrane region" description="Helical; Name=3" evidence="1">
    <location>
        <begin position="104"/>
        <end position="124"/>
    </location>
</feature>
<feature type="topological domain" description="Perinuclear space" evidence="1">
    <location>
        <begin position="125"/>
        <end position="154"/>
    </location>
</feature>
<feature type="transmembrane region" description="Helical; Name=4" evidence="1">
    <location>
        <begin position="155"/>
        <end position="175"/>
    </location>
</feature>
<feature type="topological domain" description="Cytoplasmic" evidence="1">
    <location>
        <begin position="176"/>
        <end position="205"/>
    </location>
</feature>
<feature type="transmembrane region" description="Helical; Name=5" evidence="1">
    <location>
        <begin position="206"/>
        <end position="226"/>
    </location>
</feature>
<feature type="topological domain" description="Perinuclear space" evidence="1">
    <location>
        <begin position="227"/>
        <end position="256"/>
    </location>
</feature>
<feature type="transmembrane region" description="Helical; Name=6" evidence="1">
    <location>
        <begin position="257"/>
        <end position="277"/>
    </location>
</feature>
<feature type="topological domain" description="Cytoplasmic" evidence="1">
    <location>
        <begin position="278"/>
        <end position="660"/>
    </location>
</feature>
<feature type="region of interest" description="Disordered" evidence="2">
    <location>
        <begin position="375"/>
        <end position="408"/>
    </location>
</feature>
<feature type="region of interest" description="Disordered" evidence="2">
    <location>
        <begin position="448"/>
        <end position="471"/>
    </location>
</feature>
<feature type="compositionally biased region" description="Low complexity" evidence="2">
    <location>
        <begin position="385"/>
        <end position="403"/>
    </location>
</feature>
<protein>
    <recommendedName>
        <fullName>Nucleoporin NDC1</fullName>
        <shortName>xNDC1</shortName>
    </recommendedName>
    <alternativeName>
        <fullName>Transmembrane protein 48</fullName>
    </alternativeName>
</protein>
<evidence type="ECO:0000255" key="1"/>
<evidence type="ECO:0000256" key="2">
    <source>
        <dbReference type="SAM" id="MobiDB-lite"/>
    </source>
</evidence>
<evidence type="ECO:0000269" key="3">
    <source>
    </source>
</evidence>
<evidence type="ECO:0000305" key="4"/>
<name>NDC1_XENLA</name>
<organism>
    <name type="scientific">Xenopus laevis</name>
    <name type="common">African clawed frog</name>
    <dbReference type="NCBI Taxonomy" id="8355"/>
    <lineage>
        <taxon>Eukaryota</taxon>
        <taxon>Metazoa</taxon>
        <taxon>Chordata</taxon>
        <taxon>Craniata</taxon>
        <taxon>Vertebrata</taxon>
        <taxon>Euteleostomi</taxon>
        <taxon>Amphibia</taxon>
        <taxon>Batrachia</taxon>
        <taxon>Anura</taxon>
        <taxon>Pipoidea</taxon>
        <taxon>Pipidae</taxon>
        <taxon>Xenopodinae</taxon>
        <taxon>Xenopus</taxon>
        <taxon>Xenopus</taxon>
    </lineage>
</organism>
<reference key="1">
    <citation type="journal article" date="2006" name="J. Cell Biol.">
        <title>NDC1: a crucial membrane-integral nucleoporin of metazoan nuclear pore complexes.</title>
        <authorList>
            <person name="Stavru F."/>
            <person name="Hulsmann B.B."/>
            <person name="Spang A."/>
            <person name="Hartmann E."/>
            <person name="Cordes V.C."/>
            <person name="Gorlich D."/>
        </authorList>
    </citation>
    <scope>NUCLEOTIDE SEQUENCE [MRNA]</scope>
</reference>
<reference key="2">
    <citation type="submission" date="2004-08" db="EMBL/GenBank/DDBJ databases">
        <authorList>
            <consortium name="NIH - Xenopus Gene Collection (XGC) project"/>
        </authorList>
    </citation>
    <scope>NUCLEOTIDE SEQUENCE [LARGE SCALE MRNA]</scope>
    <source>
        <tissue>Kidney</tissue>
    </source>
</reference>
<reference key="3">
    <citation type="journal article" date="2006" name="Mol. Cell">
        <title>The conserved transmembrane nucleoporin NDC1 is required for nuclear pore complex assembly in vertebrate cells.</title>
        <authorList>
            <person name="Mansfeld J."/>
            <person name="Guettinger S."/>
            <person name="Hawryluk-Gara L.A."/>
            <person name="Pante N."/>
            <person name="Mall M."/>
            <person name="Galy V."/>
            <person name="Haselmann U."/>
            <person name="Muehlhaeusser P."/>
            <person name="Wozniak R.W."/>
            <person name="Mattaj I.W."/>
            <person name="Kutay U."/>
            <person name="Antonin W."/>
        </authorList>
    </citation>
    <scope>FUNCTION</scope>
    <scope>SUBCELLULAR LOCATION</scope>
    <scope>TOPOLOGY</scope>
</reference>
<accession>Q6AX31</accession>
<comment type="function">
    <text evidence="3">Component of the nuclear pore complex (NPC), which plays a key role in de novo assembly and insertion of NPC in the nuclear envelope. Required for NPC and nuclear envelope assembly, possibly by forming a link between the nuclear envelope membrane and soluble nucleoporins, thereby anchoring the NPC in the membrane.</text>
</comment>
<comment type="subcellular location">
    <subcellularLocation>
        <location evidence="3">Nucleus</location>
        <location evidence="3">Nuclear pore complex</location>
    </subcellularLocation>
    <subcellularLocation>
        <location evidence="3">Nucleus membrane</location>
        <topology evidence="3">Multi-pass membrane protein</topology>
    </subcellularLocation>
    <text>Central core structure of the nuclear pore complex.</text>
</comment>
<comment type="similarity">
    <text evidence="4">Belongs to the NDC1 family.</text>
</comment>